<protein>
    <recommendedName>
        <fullName>Pregnancy-associated glycoprotein 76</fullName>
        <ecNumber>3.4.23.-</ecNumber>
    </recommendedName>
    <alternativeName>
        <fullName>AmbPAG 76 kDa</fullName>
    </alternativeName>
</protein>
<sequence length="25" mass="2840">RGSNLTIHPLRNIRDIFYVGNITIG</sequence>
<accession>P84918</accession>
<organism>
    <name type="scientific">Bison bison</name>
    <name type="common">American bison</name>
    <name type="synonym">Bos bison</name>
    <dbReference type="NCBI Taxonomy" id="9901"/>
    <lineage>
        <taxon>Eukaryota</taxon>
        <taxon>Metazoa</taxon>
        <taxon>Chordata</taxon>
        <taxon>Craniata</taxon>
        <taxon>Vertebrata</taxon>
        <taxon>Euteleostomi</taxon>
        <taxon>Mammalia</taxon>
        <taxon>Eutheria</taxon>
        <taxon>Laurasiatheria</taxon>
        <taxon>Artiodactyla</taxon>
        <taxon>Ruminantia</taxon>
        <taxon>Pecora</taxon>
        <taxon>Bovidae</taxon>
        <taxon>Bovinae</taxon>
        <taxon>Bison</taxon>
    </lineage>
</organism>
<reference key="1">
    <citation type="journal article" date="2008" name="Gen. Comp. Endocrinol.">
        <title>Isolation of pregnancy-associated glycoproteins from placenta of the American bison (Bison bison) at first half of pregnancy.</title>
        <authorList>
            <person name="Kiewisz J."/>
            <person name="Melo de Sousa N."/>
            <person name="Beckers J.-F.M.P."/>
            <person name="Vervaecke H."/>
            <person name="Panasiewicz G."/>
            <person name="Szafranska B."/>
        </authorList>
    </citation>
    <scope>PROTEIN SEQUENCE</scope>
    <scope>TISSUE SPECIFICITY</scope>
    <scope>DEVELOPMENTAL STAGE</scope>
    <scope>GLYCOSYLATION</scope>
    <source>
        <tissue>Placenta</tissue>
    </source>
</reference>
<comment type="subcellular location">
    <subcellularLocation>
        <location>Secreted</location>
        <location>Extracellular space</location>
    </subcellularLocation>
</comment>
<comment type="tissue specificity">
    <text evidence="2">Placental cotyledons.</text>
</comment>
<comment type="developmental stage">
    <text evidence="2">Expressed between month 3 and month 4 of pregnancy.</text>
</comment>
<comment type="PTM">
    <text evidence="2">N-glycosylated.</text>
</comment>
<comment type="similarity">
    <text evidence="1">Belongs to the peptidase A1 family.</text>
</comment>
<feature type="chain" id="PRO_0000249182" description="Pregnancy-associated glycoprotein 76">
    <location>
        <begin position="1"/>
        <end position="25" status="greater than"/>
    </location>
</feature>
<feature type="glycosylation site" description="N-linked (GlcNAc...) asparagine" evidence="1">
    <location>
        <position position="4"/>
    </location>
</feature>
<feature type="glycosylation site" description="N-linked (GlcNAc...) asparagine" evidence="1">
    <location>
        <position position="21"/>
    </location>
</feature>
<feature type="non-terminal residue">
    <location>
        <position position="25"/>
    </location>
</feature>
<proteinExistence type="evidence at protein level"/>
<name>PAG76_BISBI</name>
<evidence type="ECO:0000255" key="1"/>
<evidence type="ECO:0000269" key="2">
    <source>
    </source>
</evidence>
<keyword id="KW-0064">Aspartyl protease</keyword>
<keyword id="KW-0903">Direct protein sequencing</keyword>
<keyword id="KW-0325">Glycoprotein</keyword>
<keyword id="KW-0378">Hydrolase</keyword>
<keyword id="KW-0645">Protease</keyword>
<keyword id="KW-0964">Secreted</keyword>
<dbReference type="EC" id="3.4.23.-"/>
<dbReference type="GO" id="GO:0005576">
    <property type="term" value="C:extracellular region"/>
    <property type="evidence" value="ECO:0007669"/>
    <property type="project" value="UniProtKB-SubCell"/>
</dbReference>
<dbReference type="GO" id="GO:0004190">
    <property type="term" value="F:aspartic-type endopeptidase activity"/>
    <property type="evidence" value="ECO:0007669"/>
    <property type="project" value="UniProtKB-KW"/>
</dbReference>
<dbReference type="GO" id="GO:0006508">
    <property type="term" value="P:proteolysis"/>
    <property type="evidence" value="ECO:0007669"/>
    <property type="project" value="UniProtKB-KW"/>
</dbReference>